<protein>
    <recommendedName>
        <fullName evidence="1">tRNA (guanine(26)-N(2))-dimethyltransferase</fullName>
        <ecNumber evidence="1">2.1.1.216</ecNumber>
    </recommendedName>
    <alternativeName>
        <fullName evidence="1">tRNA 2,2-dimethylguanosine-26 methyltransferase</fullName>
    </alternativeName>
    <alternativeName>
        <fullName evidence="1">tRNA(guanine-26,N(2)-N(2)) methyltransferase</fullName>
    </alternativeName>
    <alternativeName>
        <fullName evidence="1">tRNA(m(2,2)G26)dimethyltransferase</fullName>
    </alternativeName>
</protein>
<accession>Q97ZH0</accession>
<gene>
    <name evidence="1" type="primary">trm1</name>
    <name type="ordered locus">SSO0943</name>
</gene>
<proteinExistence type="inferred from homology"/>
<reference key="1">
    <citation type="journal article" date="2001" name="Proc. Natl. Acad. Sci. U.S.A.">
        <title>The complete genome of the crenarchaeon Sulfolobus solfataricus P2.</title>
        <authorList>
            <person name="She Q."/>
            <person name="Singh R.K."/>
            <person name="Confalonieri F."/>
            <person name="Zivanovic Y."/>
            <person name="Allard G."/>
            <person name="Awayez M.J."/>
            <person name="Chan-Weiher C.C.-Y."/>
            <person name="Clausen I.G."/>
            <person name="Curtis B.A."/>
            <person name="De Moors A."/>
            <person name="Erauso G."/>
            <person name="Fletcher C."/>
            <person name="Gordon P.M.K."/>
            <person name="Heikamp-de Jong I."/>
            <person name="Jeffries A.C."/>
            <person name="Kozera C.J."/>
            <person name="Medina N."/>
            <person name="Peng X."/>
            <person name="Thi-Ngoc H.P."/>
            <person name="Redder P."/>
            <person name="Schenk M.E."/>
            <person name="Theriault C."/>
            <person name="Tolstrup N."/>
            <person name="Charlebois R.L."/>
            <person name="Doolittle W.F."/>
            <person name="Duguet M."/>
            <person name="Gaasterland T."/>
            <person name="Garrett R.A."/>
            <person name="Ragan M.A."/>
            <person name="Sensen C.W."/>
            <person name="Van der Oost J."/>
        </authorList>
    </citation>
    <scope>NUCLEOTIDE SEQUENCE [LARGE SCALE GENOMIC DNA]</scope>
    <source>
        <strain>ATCC 35092 / DSM 1617 / JCM 11322 / P2</strain>
    </source>
</reference>
<sequence length="378" mass="42874">MKLKEVTEGKVRIFVPDPTGYMVEGKFDPSWAPVFYNPKMTFNRDLSVIVVSILKPKIIVDALSATGIRGIRYYVESWKSEQLILNDKNPNATSLIQINAKNNGIENAKIYNKDANALLYEVKSDYIDIDPFGSPAPFILSSLNAATRNGIVAFTATDLSPLEGSSPTSCRRKYDAINHKLSSSKELGLRVLIGKIIREAAILEKTVYPLFSFYADYYYRLFVRVENGARKADDNINKHLKYFGECPRCGFQTFVEENCKTKCPVCGEIFSIIGPLYIGPLYSMEFLKRIMDLYSNFNYLTSFNRIQKLLNVIEKEARFKNVFYNISKLASKLKISAIPPIESILECLGDASRTHFAPTGIRTDKEYEEITKCIKSLR</sequence>
<feature type="chain" id="PRO_0000147693" description="tRNA (guanine(26)-N(2))-dimethyltransferase">
    <location>
        <begin position="1"/>
        <end position="378"/>
    </location>
</feature>
<feature type="domain" description="Trm1 methyltransferase" evidence="1">
    <location>
        <begin position="4"/>
        <end position="374"/>
    </location>
</feature>
<feature type="binding site" evidence="1">
    <location>
        <position position="44"/>
    </location>
    <ligand>
        <name>S-adenosyl-L-methionine</name>
        <dbReference type="ChEBI" id="CHEBI:59789"/>
    </ligand>
</feature>
<feature type="binding site" evidence="1">
    <location>
        <position position="69"/>
    </location>
    <ligand>
        <name>S-adenosyl-L-methionine</name>
        <dbReference type="ChEBI" id="CHEBI:59789"/>
    </ligand>
</feature>
<feature type="binding site" evidence="1">
    <location>
        <position position="87"/>
    </location>
    <ligand>
        <name>S-adenosyl-L-methionine</name>
        <dbReference type="ChEBI" id="CHEBI:59789"/>
    </ligand>
</feature>
<feature type="binding site" evidence="1">
    <location>
        <position position="114"/>
    </location>
    <ligand>
        <name>S-adenosyl-L-methionine</name>
        <dbReference type="ChEBI" id="CHEBI:59789"/>
    </ligand>
</feature>
<feature type="binding site" evidence="1">
    <location>
        <position position="115"/>
    </location>
    <ligand>
        <name>S-adenosyl-L-methionine</name>
        <dbReference type="ChEBI" id="CHEBI:59789"/>
    </ligand>
</feature>
<feature type="binding site" evidence="1">
    <location>
        <position position="246"/>
    </location>
    <ligand>
        <name>Zn(2+)</name>
        <dbReference type="ChEBI" id="CHEBI:29105"/>
    </ligand>
</feature>
<feature type="binding site" evidence="1">
    <location>
        <position position="249"/>
    </location>
    <ligand>
        <name>Zn(2+)</name>
        <dbReference type="ChEBI" id="CHEBI:29105"/>
    </ligand>
</feature>
<feature type="binding site" evidence="1">
    <location>
        <position position="263"/>
    </location>
    <ligand>
        <name>Zn(2+)</name>
        <dbReference type="ChEBI" id="CHEBI:29105"/>
    </ligand>
</feature>
<feature type="binding site" evidence="1">
    <location>
        <position position="266"/>
    </location>
    <ligand>
        <name>Zn(2+)</name>
        <dbReference type="ChEBI" id="CHEBI:29105"/>
    </ligand>
</feature>
<evidence type="ECO:0000255" key="1">
    <source>
        <dbReference type="HAMAP-Rule" id="MF_00290"/>
    </source>
</evidence>
<keyword id="KW-0479">Metal-binding</keyword>
<keyword id="KW-0489">Methyltransferase</keyword>
<keyword id="KW-1185">Reference proteome</keyword>
<keyword id="KW-0694">RNA-binding</keyword>
<keyword id="KW-0949">S-adenosyl-L-methionine</keyword>
<keyword id="KW-0808">Transferase</keyword>
<keyword id="KW-0819">tRNA processing</keyword>
<keyword id="KW-0820">tRNA-binding</keyword>
<keyword id="KW-0862">Zinc</keyword>
<comment type="function">
    <text evidence="1">Dimethylates a single guanine residue at position 26 of a number of tRNAs using S-adenosyl-L-methionine as donor of the methyl groups.</text>
</comment>
<comment type="catalytic activity">
    <reaction evidence="1">
        <text>guanosine(26) in tRNA + 2 S-adenosyl-L-methionine = N(2)-dimethylguanosine(26) in tRNA + 2 S-adenosyl-L-homocysteine + 2 H(+)</text>
        <dbReference type="Rhea" id="RHEA:43140"/>
        <dbReference type="Rhea" id="RHEA-COMP:10359"/>
        <dbReference type="Rhea" id="RHEA-COMP:10360"/>
        <dbReference type="ChEBI" id="CHEBI:15378"/>
        <dbReference type="ChEBI" id="CHEBI:57856"/>
        <dbReference type="ChEBI" id="CHEBI:59789"/>
        <dbReference type="ChEBI" id="CHEBI:74269"/>
        <dbReference type="ChEBI" id="CHEBI:74513"/>
        <dbReference type="EC" id="2.1.1.216"/>
    </reaction>
</comment>
<comment type="similarity">
    <text evidence="1">Belongs to the class I-like SAM-binding methyltransferase superfamily. Trm1 family.</text>
</comment>
<organism>
    <name type="scientific">Saccharolobus solfataricus (strain ATCC 35092 / DSM 1617 / JCM 11322 / P2)</name>
    <name type="common">Sulfolobus solfataricus</name>
    <dbReference type="NCBI Taxonomy" id="273057"/>
    <lineage>
        <taxon>Archaea</taxon>
        <taxon>Thermoproteota</taxon>
        <taxon>Thermoprotei</taxon>
        <taxon>Sulfolobales</taxon>
        <taxon>Sulfolobaceae</taxon>
        <taxon>Saccharolobus</taxon>
    </lineage>
</organism>
<name>TRM1_SACS2</name>
<dbReference type="EC" id="2.1.1.216" evidence="1"/>
<dbReference type="EMBL" id="AE006641">
    <property type="protein sequence ID" value="AAK41219.1"/>
    <property type="molecule type" value="Genomic_DNA"/>
</dbReference>
<dbReference type="PIR" id="D90245">
    <property type="entry name" value="D90245"/>
</dbReference>
<dbReference type="RefSeq" id="WP_009992377.1">
    <property type="nucleotide sequence ID" value="NC_002754.1"/>
</dbReference>
<dbReference type="SMR" id="Q97ZH0"/>
<dbReference type="FunCoup" id="Q97ZH0">
    <property type="interactions" value="276"/>
</dbReference>
<dbReference type="STRING" id="273057.SSO0943"/>
<dbReference type="PaxDb" id="273057-SSO0943"/>
<dbReference type="EnsemblBacteria" id="AAK41219">
    <property type="protein sequence ID" value="AAK41219"/>
    <property type="gene ID" value="SSO0943"/>
</dbReference>
<dbReference type="KEGG" id="sso:SSO0943"/>
<dbReference type="PATRIC" id="fig|273057.12.peg.939"/>
<dbReference type="eggNOG" id="arCOG01219">
    <property type="taxonomic scope" value="Archaea"/>
</dbReference>
<dbReference type="HOGENOM" id="CLU_010862_5_1_2"/>
<dbReference type="InParanoid" id="Q97ZH0"/>
<dbReference type="PhylomeDB" id="Q97ZH0"/>
<dbReference type="Proteomes" id="UP000001974">
    <property type="component" value="Chromosome"/>
</dbReference>
<dbReference type="GO" id="GO:0160104">
    <property type="term" value="F:tRNA (guanine(26)-N2)-dimethyltransferase activity"/>
    <property type="evidence" value="ECO:0007669"/>
    <property type="project" value="UniProtKB-UniRule"/>
</dbReference>
<dbReference type="GO" id="GO:0000049">
    <property type="term" value="F:tRNA binding"/>
    <property type="evidence" value="ECO:0007669"/>
    <property type="project" value="UniProtKB-KW"/>
</dbReference>
<dbReference type="GO" id="GO:0002940">
    <property type="term" value="P:tRNA N2-guanine methylation"/>
    <property type="evidence" value="ECO:0000318"/>
    <property type="project" value="GO_Central"/>
</dbReference>
<dbReference type="FunFam" id="3.40.50.150:FF:000272">
    <property type="entry name" value="tRNA (guanine(26)-N(2))-dimethyltransferase"/>
    <property type="match status" value="1"/>
</dbReference>
<dbReference type="Gene3D" id="3.30.56.70">
    <property type="entry name" value="N2,N2-dimethylguanosine tRNA methyltransferase, C-terminal domain"/>
    <property type="match status" value="1"/>
</dbReference>
<dbReference type="Gene3D" id="3.40.50.150">
    <property type="entry name" value="Vaccinia Virus protein VP39"/>
    <property type="match status" value="1"/>
</dbReference>
<dbReference type="HAMAP" id="MF_00290">
    <property type="entry name" value="tRNA_dimethyltr_TRM1"/>
    <property type="match status" value="1"/>
</dbReference>
<dbReference type="InterPro" id="IPR029063">
    <property type="entry name" value="SAM-dependent_MTases_sf"/>
</dbReference>
<dbReference type="InterPro" id="IPR002905">
    <property type="entry name" value="Trm1"/>
</dbReference>
<dbReference type="InterPro" id="IPR022923">
    <property type="entry name" value="TRM1_arc_bac"/>
</dbReference>
<dbReference type="InterPro" id="IPR042296">
    <property type="entry name" value="tRNA_met_Trm1_C"/>
</dbReference>
<dbReference type="NCBIfam" id="NF003331">
    <property type="entry name" value="PRK04338.1-7"/>
    <property type="match status" value="1"/>
</dbReference>
<dbReference type="NCBIfam" id="TIGR00308">
    <property type="entry name" value="TRM1"/>
    <property type="match status" value="1"/>
</dbReference>
<dbReference type="PANTHER" id="PTHR10631">
    <property type="entry name" value="N 2 ,N 2 -DIMETHYLGUANOSINE TRNA METHYLTRANSFERASE"/>
    <property type="match status" value="1"/>
</dbReference>
<dbReference type="PANTHER" id="PTHR10631:SF3">
    <property type="entry name" value="TRNA (GUANINE(26)-N(2))-DIMETHYLTRANSFERASE"/>
    <property type="match status" value="1"/>
</dbReference>
<dbReference type="Pfam" id="PF02005">
    <property type="entry name" value="TRM"/>
    <property type="match status" value="1"/>
</dbReference>
<dbReference type="SUPFAM" id="SSF53335">
    <property type="entry name" value="S-adenosyl-L-methionine-dependent methyltransferases"/>
    <property type="match status" value="1"/>
</dbReference>
<dbReference type="PROSITE" id="PS51626">
    <property type="entry name" value="SAM_MT_TRM1"/>
    <property type="match status" value="1"/>
</dbReference>